<comment type="similarity">
    <text evidence="1">To A.fulgidus AF2407.1.</text>
</comment>
<name>Y603_PYRAB</name>
<feature type="chain" id="PRO_0000184781" description="Uncharacterized protein PYRAB06030">
    <location>
        <begin position="1"/>
        <end position="58"/>
    </location>
</feature>
<accession>Q9V126</accession>
<accession>G8ZJ68</accession>
<proteinExistence type="predicted"/>
<reference key="1">
    <citation type="journal article" date="2003" name="Mol. Microbiol.">
        <title>An integrated analysis of the genome of the hyperthermophilic archaeon Pyrococcus abyssi.</title>
        <authorList>
            <person name="Cohen G.N."/>
            <person name="Barbe V."/>
            <person name="Flament D."/>
            <person name="Galperin M."/>
            <person name="Heilig R."/>
            <person name="Lecompte O."/>
            <person name="Poch O."/>
            <person name="Prieur D."/>
            <person name="Querellou J."/>
            <person name="Ripp R."/>
            <person name="Thierry J.-C."/>
            <person name="Van der Oost J."/>
            <person name="Weissenbach J."/>
            <person name="Zivanovic Y."/>
            <person name="Forterre P."/>
        </authorList>
    </citation>
    <scope>NUCLEOTIDE SEQUENCE [LARGE SCALE GENOMIC DNA]</scope>
    <source>
        <strain>GE5 / Orsay</strain>
    </source>
</reference>
<reference key="2">
    <citation type="journal article" date="2012" name="Curr. Microbiol.">
        <title>Re-annotation of two hyperthermophilic archaea Pyrococcus abyssi GE5 and Pyrococcus furiosus DSM 3638.</title>
        <authorList>
            <person name="Gao J."/>
            <person name="Wang J."/>
        </authorList>
    </citation>
    <scope>GENOME REANNOTATION</scope>
    <source>
        <strain>GE5 / Orsay</strain>
    </source>
</reference>
<evidence type="ECO:0000305" key="1"/>
<dbReference type="EMBL" id="AJ248284">
    <property type="protein sequence ID" value="CAB49525.1"/>
    <property type="molecule type" value="Genomic_DNA"/>
</dbReference>
<dbReference type="EMBL" id="HE613800">
    <property type="protein sequence ID" value="CCE69995.1"/>
    <property type="molecule type" value="Genomic_DNA"/>
</dbReference>
<dbReference type="PIR" id="F75180">
    <property type="entry name" value="F75180"/>
</dbReference>
<dbReference type="RefSeq" id="WP_010867727.1">
    <property type="nucleotide sequence ID" value="NC_000868.1"/>
</dbReference>
<dbReference type="SMR" id="Q9V126"/>
<dbReference type="STRING" id="272844.PAB3148"/>
<dbReference type="KEGG" id="pab:PAB3148"/>
<dbReference type="PATRIC" id="fig|272844.11.peg.641"/>
<dbReference type="eggNOG" id="arCOG05767">
    <property type="taxonomic scope" value="Archaea"/>
</dbReference>
<dbReference type="HOGENOM" id="CLU_3013005_0_0_2"/>
<dbReference type="OrthoDB" id="84364at2157"/>
<dbReference type="PhylomeDB" id="Q9V126"/>
<dbReference type="Proteomes" id="UP000000810">
    <property type="component" value="Chromosome"/>
</dbReference>
<dbReference type="Proteomes" id="UP000009139">
    <property type="component" value="Chromosome"/>
</dbReference>
<protein>
    <recommendedName>
        <fullName>Uncharacterized protein PYRAB06030</fullName>
    </recommendedName>
</protein>
<gene>
    <name type="ordered locus">PYRAB06030</name>
    <name type="ORF">PAB3148</name>
</gene>
<sequence length="58" mass="6777">MERKKLVCPLCGGTKFRVEEGKIDSKWGFTAHKVKIVICENCGYVMLFYEGRTIWDFD</sequence>
<organism>
    <name type="scientific">Pyrococcus abyssi (strain GE5 / Orsay)</name>
    <dbReference type="NCBI Taxonomy" id="272844"/>
    <lineage>
        <taxon>Archaea</taxon>
        <taxon>Methanobacteriati</taxon>
        <taxon>Methanobacteriota</taxon>
        <taxon>Thermococci</taxon>
        <taxon>Thermococcales</taxon>
        <taxon>Thermococcaceae</taxon>
        <taxon>Pyrococcus</taxon>
    </lineage>
</organism>